<sequence length="207" mass="22303">MKVQVLNLDGTAGKGEVELSDDVFGLEPRADILHRVVTWQLENRRGIARKARERSDVARTGKKFGRQKGGGTARHGDRKAPIFIGGGKAHGPRVREFNISLNKKVRALGLKMALSSKAKAGLVVVDNLDVDAKTKALVGQLAKANWGKKVLVIDGEGVNDNFAKAARNIVGVNVLPAIGANVYDILKHDTLVLTRAAVEKLEARFNG</sequence>
<evidence type="ECO:0000255" key="1">
    <source>
        <dbReference type="HAMAP-Rule" id="MF_01328"/>
    </source>
</evidence>
<evidence type="ECO:0000256" key="2">
    <source>
        <dbReference type="SAM" id="MobiDB-lite"/>
    </source>
</evidence>
<evidence type="ECO:0000305" key="3"/>
<reference key="1">
    <citation type="submission" date="2006-01" db="EMBL/GenBank/DDBJ databases">
        <title>Complete sequence of Novosphingobium aromaticivorans DSM 12444.</title>
        <authorList>
            <consortium name="US DOE Joint Genome Institute"/>
            <person name="Copeland A."/>
            <person name="Lucas S."/>
            <person name="Lapidus A."/>
            <person name="Barry K."/>
            <person name="Detter J.C."/>
            <person name="Glavina T."/>
            <person name="Hammon N."/>
            <person name="Israni S."/>
            <person name="Pitluck S."/>
            <person name="Chain P."/>
            <person name="Malfatti S."/>
            <person name="Shin M."/>
            <person name="Vergez L."/>
            <person name="Schmutz J."/>
            <person name="Larimer F."/>
            <person name="Land M."/>
            <person name="Kyrpides N."/>
            <person name="Ivanova N."/>
            <person name="Fredrickson J."/>
            <person name="Balkwill D."/>
            <person name="Romine M.F."/>
            <person name="Richardson P."/>
        </authorList>
    </citation>
    <scope>NUCLEOTIDE SEQUENCE [LARGE SCALE GENOMIC DNA]</scope>
    <source>
        <strain>ATCC 700278 / DSM 12444 / CCUG 56034 / CIP 105152 / NBRC 16084 / F199</strain>
    </source>
</reference>
<dbReference type="EMBL" id="CP000248">
    <property type="protein sequence ID" value="ABD25694.1"/>
    <property type="molecule type" value="Genomic_DNA"/>
</dbReference>
<dbReference type="RefSeq" id="WP_011444908.1">
    <property type="nucleotide sequence ID" value="NC_007794.1"/>
</dbReference>
<dbReference type="SMR" id="Q2G8X9"/>
<dbReference type="STRING" id="279238.Saro_1250"/>
<dbReference type="KEGG" id="nar:Saro_1250"/>
<dbReference type="eggNOG" id="COG0088">
    <property type="taxonomic scope" value="Bacteria"/>
</dbReference>
<dbReference type="HOGENOM" id="CLU_041575_5_1_5"/>
<dbReference type="Proteomes" id="UP000009134">
    <property type="component" value="Chromosome"/>
</dbReference>
<dbReference type="GO" id="GO:1990904">
    <property type="term" value="C:ribonucleoprotein complex"/>
    <property type="evidence" value="ECO:0007669"/>
    <property type="project" value="UniProtKB-KW"/>
</dbReference>
<dbReference type="GO" id="GO:0005840">
    <property type="term" value="C:ribosome"/>
    <property type="evidence" value="ECO:0007669"/>
    <property type="project" value="UniProtKB-KW"/>
</dbReference>
<dbReference type="GO" id="GO:0019843">
    <property type="term" value="F:rRNA binding"/>
    <property type="evidence" value="ECO:0007669"/>
    <property type="project" value="UniProtKB-UniRule"/>
</dbReference>
<dbReference type="GO" id="GO:0003735">
    <property type="term" value="F:structural constituent of ribosome"/>
    <property type="evidence" value="ECO:0007669"/>
    <property type="project" value="InterPro"/>
</dbReference>
<dbReference type="GO" id="GO:0006412">
    <property type="term" value="P:translation"/>
    <property type="evidence" value="ECO:0007669"/>
    <property type="project" value="UniProtKB-UniRule"/>
</dbReference>
<dbReference type="Gene3D" id="3.40.1370.10">
    <property type="match status" value="1"/>
</dbReference>
<dbReference type="HAMAP" id="MF_01328_B">
    <property type="entry name" value="Ribosomal_uL4_B"/>
    <property type="match status" value="1"/>
</dbReference>
<dbReference type="InterPro" id="IPR002136">
    <property type="entry name" value="Ribosomal_uL4"/>
</dbReference>
<dbReference type="InterPro" id="IPR013005">
    <property type="entry name" value="Ribosomal_uL4-like"/>
</dbReference>
<dbReference type="InterPro" id="IPR023574">
    <property type="entry name" value="Ribosomal_uL4_dom_sf"/>
</dbReference>
<dbReference type="NCBIfam" id="TIGR03953">
    <property type="entry name" value="rplD_bact"/>
    <property type="match status" value="1"/>
</dbReference>
<dbReference type="PANTHER" id="PTHR10746">
    <property type="entry name" value="50S RIBOSOMAL PROTEIN L4"/>
    <property type="match status" value="1"/>
</dbReference>
<dbReference type="PANTHER" id="PTHR10746:SF6">
    <property type="entry name" value="LARGE RIBOSOMAL SUBUNIT PROTEIN UL4M"/>
    <property type="match status" value="1"/>
</dbReference>
<dbReference type="Pfam" id="PF00573">
    <property type="entry name" value="Ribosomal_L4"/>
    <property type="match status" value="1"/>
</dbReference>
<dbReference type="SUPFAM" id="SSF52166">
    <property type="entry name" value="Ribosomal protein L4"/>
    <property type="match status" value="1"/>
</dbReference>
<proteinExistence type="inferred from homology"/>
<keyword id="KW-1185">Reference proteome</keyword>
<keyword id="KW-0687">Ribonucleoprotein</keyword>
<keyword id="KW-0689">Ribosomal protein</keyword>
<keyword id="KW-0694">RNA-binding</keyword>
<keyword id="KW-0699">rRNA-binding</keyword>
<comment type="function">
    <text evidence="1">One of the primary rRNA binding proteins, this protein initially binds near the 5'-end of the 23S rRNA. It is important during the early stages of 50S assembly. It makes multiple contacts with different domains of the 23S rRNA in the assembled 50S subunit and ribosome.</text>
</comment>
<comment type="function">
    <text evidence="1">Forms part of the polypeptide exit tunnel.</text>
</comment>
<comment type="subunit">
    <text evidence="1">Part of the 50S ribosomal subunit.</text>
</comment>
<comment type="similarity">
    <text evidence="1">Belongs to the universal ribosomal protein uL4 family.</text>
</comment>
<gene>
    <name evidence="1" type="primary">rplD</name>
    <name type="ordered locus">Saro_1250</name>
</gene>
<name>RL4_NOVAD</name>
<accession>Q2G8X9</accession>
<organism>
    <name type="scientific">Novosphingobium aromaticivorans (strain ATCC 700278 / DSM 12444 / CCUG 56034 / CIP 105152 / NBRC 16084 / F199)</name>
    <dbReference type="NCBI Taxonomy" id="279238"/>
    <lineage>
        <taxon>Bacteria</taxon>
        <taxon>Pseudomonadati</taxon>
        <taxon>Pseudomonadota</taxon>
        <taxon>Alphaproteobacteria</taxon>
        <taxon>Sphingomonadales</taxon>
        <taxon>Sphingomonadaceae</taxon>
        <taxon>Novosphingobium</taxon>
    </lineage>
</organism>
<protein>
    <recommendedName>
        <fullName evidence="1">Large ribosomal subunit protein uL4</fullName>
    </recommendedName>
    <alternativeName>
        <fullName evidence="3">50S ribosomal protein L4</fullName>
    </alternativeName>
</protein>
<feature type="chain" id="PRO_0000242407" description="Large ribosomal subunit protein uL4">
    <location>
        <begin position="1"/>
        <end position="207"/>
    </location>
</feature>
<feature type="region of interest" description="Disordered" evidence="2">
    <location>
        <begin position="53"/>
        <end position="85"/>
    </location>
</feature>